<protein>
    <recommendedName>
        <fullName evidence="1">UDP-3-O-acyl-N-acetylglucosamine deacetylase</fullName>
        <shortName evidence="1">UDP-3-O-acyl-GlcNAc deacetylase</shortName>
        <ecNumber evidence="1">3.5.1.108</ecNumber>
    </recommendedName>
    <alternativeName>
        <fullName evidence="1">UDP-3-O-[R-3-hydroxymyristoyl]-N-acetylglucosamine deacetylase</fullName>
    </alternativeName>
</protein>
<accession>B5EFL8</accession>
<feature type="chain" id="PRO_1000122795" description="UDP-3-O-acyl-N-acetylglucosamine deacetylase">
    <location>
        <begin position="1"/>
        <end position="305"/>
    </location>
</feature>
<feature type="active site" description="Proton donor" evidence="1">
    <location>
        <position position="262"/>
    </location>
</feature>
<feature type="binding site" evidence="1">
    <location>
        <position position="78"/>
    </location>
    <ligand>
        <name>Zn(2+)</name>
        <dbReference type="ChEBI" id="CHEBI:29105"/>
    </ligand>
</feature>
<feature type="binding site" evidence="1">
    <location>
        <position position="235"/>
    </location>
    <ligand>
        <name>Zn(2+)</name>
        <dbReference type="ChEBI" id="CHEBI:29105"/>
    </ligand>
</feature>
<feature type="binding site" evidence="1">
    <location>
        <position position="239"/>
    </location>
    <ligand>
        <name>Zn(2+)</name>
        <dbReference type="ChEBI" id="CHEBI:29105"/>
    </ligand>
</feature>
<gene>
    <name evidence="1" type="primary">lpxC</name>
    <name type="ordered locus">Gbem_0901</name>
</gene>
<organism>
    <name type="scientific">Citrifermentans bemidjiense (strain ATCC BAA-1014 / DSM 16622 / JCM 12645 / Bem)</name>
    <name type="common">Geobacter bemidjiensis</name>
    <dbReference type="NCBI Taxonomy" id="404380"/>
    <lineage>
        <taxon>Bacteria</taxon>
        <taxon>Pseudomonadati</taxon>
        <taxon>Thermodesulfobacteriota</taxon>
        <taxon>Desulfuromonadia</taxon>
        <taxon>Geobacterales</taxon>
        <taxon>Geobacteraceae</taxon>
        <taxon>Citrifermentans</taxon>
    </lineage>
</organism>
<dbReference type="EC" id="3.5.1.108" evidence="1"/>
<dbReference type="EMBL" id="CP001124">
    <property type="protein sequence ID" value="ACH37922.1"/>
    <property type="molecule type" value="Genomic_DNA"/>
</dbReference>
<dbReference type="RefSeq" id="WP_012529334.1">
    <property type="nucleotide sequence ID" value="NC_011146.1"/>
</dbReference>
<dbReference type="SMR" id="B5EFL8"/>
<dbReference type="STRING" id="404380.Gbem_0901"/>
<dbReference type="KEGG" id="gbm:Gbem_0901"/>
<dbReference type="eggNOG" id="COG0774">
    <property type="taxonomic scope" value="Bacteria"/>
</dbReference>
<dbReference type="HOGENOM" id="CLU_046528_1_0_7"/>
<dbReference type="OrthoDB" id="9802746at2"/>
<dbReference type="UniPathway" id="UPA00359">
    <property type="reaction ID" value="UER00478"/>
</dbReference>
<dbReference type="Proteomes" id="UP000008825">
    <property type="component" value="Chromosome"/>
</dbReference>
<dbReference type="GO" id="GO:0016020">
    <property type="term" value="C:membrane"/>
    <property type="evidence" value="ECO:0007669"/>
    <property type="project" value="GOC"/>
</dbReference>
<dbReference type="GO" id="GO:0046872">
    <property type="term" value="F:metal ion binding"/>
    <property type="evidence" value="ECO:0007669"/>
    <property type="project" value="UniProtKB-KW"/>
</dbReference>
<dbReference type="GO" id="GO:0103117">
    <property type="term" value="F:UDP-3-O-acyl-N-acetylglucosamine deacetylase activity"/>
    <property type="evidence" value="ECO:0007669"/>
    <property type="project" value="UniProtKB-UniRule"/>
</dbReference>
<dbReference type="GO" id="GO:0009245">
    <property type="term" value="P:lipid A biosynthetic process"/>
    <property type="evidence" value="ECO:0007669"/>
    <property type="project" value="UniProtKB-UniRule"/>
</dbReference>
<dbReference type="Gene3D" id="3.30.230.20">
    <property type="entry name" value="lpxc deacetylase, domain 1"/>
    <property type="match status" value="1"/>
</dbReference>
<dbReference type="Gene3D" id="3.30.1700.10">
    <property type="entry name" value="lpxc deacetylase, domain 2"/>
    <property type="match status" value="1"/>
</dbReference>
<dbReference type="HAMAP" id="MF_00388">
    <property type="entry name" value="LpxC"/>
    <property type="match status" value="1"/>
</dbReference>
<dbReference type="InterPro" id="IPR020568">
    <property type="entry name" value="Ribosomal_Su5_D2-typ_SF"/>
</dbReference>
<dbReference type="InterPro" id="IPR004463">
    <property type="entry name" value="UDP-acyl_GlcNac_deAcase"/>
</dbReference>
<dbReference type="InterPro" id="IPR011334">
    <property type="entry name" value="UDP-acyl_GlcNac_deAcase_C"/>
</dbReference>
<dbReference type="InterPro" id="IPR015870">
    <property type="entry name" value="UDP-acyl_N-AcGlcN_deAcase_N"/>
</dbReference>
<dbReference type="NCBIfam" id="TIGR00325">
    <property type="entry name" value="lpxC"/>
    <property type="match status" value="1"/>
</dbReference>
<dbReference type="PANTHER" id="PTHR33694">
    <property type="entry name" value="UDP-3-O-ACYL-N-ACETYLGLUCOSAMINE DEACETYLASE 1, MITOCHONDRIAL-RELATED"/>
    <property type="match status" value="1"/>
</dbReference>
<dbReference type="PANTHER" id="PTHR33694:SF1">
    <property type="entry name" value="UDP-3-O-ACYL-N-ACETYLGLUCOSAMINE DEACETYLASE 1, MITOCHONDRIAL-RELATED"/>
    <property type="match status" value="1"/>
</dbReference>
<dbReference type="Pfam" id="PF03331">
    <property type="entry name" value="LpxC"/>
    <property type="match status" value="1"/>
</dbReference>
<dbReference type="SUPFAM" id="SSF54211">
    <property type="entry name" value="Ribosomal protein S5 domain 2-like"/>
    <property type="match status" value="2"/>
</dbReference>
<proteinExistence type="inferred from homology"/>
<evidence type="ECO:0000255" key="1">
    <source>
        <dbReference type="HAMAP-Rule" id="MF_00388"/>
    </source>
</evidence>
<comment type="function">
    <text evidence="1">Catalyzes the hydrolysis of UDP-3-O-myristoyl-N-acetylglucosamine to form UDP-3-O-myristoylglucosamine and acetate, the committed step in lipid A biosynthesis.</text>
</comment>
<comment type="catalytic activity">
    <reaction evidence="1">
        <text>a UDP-3-O-[(3R)-3-hydroxyacyl]-N-acetyl-alpha-D-glucosamine + H2O = a UDP-3-O-[(3R)-3-hydroxyacyl]-alpha-D-glucosamine + acetate</text>
        <dbReference type="Rhea" id="RHEA:67816"/>
        <dbReference type="ChEBI" id="CHEBI:15377"/>
        <dbReference type="ChEBI" id="CHEBI:30089"/>
        <dbReference type="ChEBI" id="CHEBI:137740"/>
        <dbReference type="ChEBI" id="CHEBI:173225"/>
        <dbReference type="EC" id="3.5.1.108"/>
    </reaction>
</comment>
<comment type="cofactor">
    <cofactor evidence="1">
        <name>Zn(2+)</name>
        <dbReference type="ChEBI" id="CHEBI:29105"/>
    </cofactor>
</comment>
<comment type="pathway">
    <text evidence="1">Glycolipid biosynthesis; lipid IV(A) biosynthesis; lipid IV(A) from (3R)-3-hydroxytetradecanoyl-[acyl-carrier-protein] and UDP-N-acetyl-alpha-D-glucosamine: step 2/6.</text>
</comment>
<comment type="similarity">
    <text evidence="1">Belongs to the LpxC family.</text>
</comment>
<name>LPXC_CITBB</name>
<sequence length="305" mass="32799">MIFQQTLGNKATFSGIGLHTGKTITLTLRPAEAGTGIVFHRVDLAPAVSIEAHASNVVNTRLSTTIGRGDASVSTIEHLMAALYGCGIDNAHVDIDGPEVPIMDGSAAPFVAAITKAGVKVSGKARKYLVVKKPVTVVDGDKKATIIPSRHYKISFDMQFAHPAVKSQFRSLEFSQESFIGDFAAARTFGFLAEVEMMKSHGLALGGSLENAVVIGDNGVINPEGLRFQDEFVRHKILDSVGDLSLTGHRLIGHVKATKSGHDLNHKLVTELLKRPDCYTLIEFTPQAFNAPFNIGIPELSWLEA</sequence>
<reference key="1">
    <citation type="submission" date="2008-07" db="EMBL/GenBank/DDBJ databases">
        <title>Complete sequence of Geobacter bemidjiensis BEM.</title>
        <authorList>
            <consortium name="US DOE Joint Genome Institute"/>
            <person name="Lucas S."/>
            <person name="Copeland A."/>
            <person name="Lapidus A."/>
            <person name="Glavina del Rio T."/>
            <person name="Dalin E."/>
            <person name="Tice H."/>
            <person name="Bruce D."/>
            <person name="Goodwin L."/>
            <person name="Pitluck S."/>
            <person name="Kiss H."/>
            <person name="Brettin T."/>
            <person name="Detter J.C."/>
            <person name="Han C."/>
            <person name="Kuske C.R."/>
            <person name="Schmutz J."/>
            <person name="Larimer F."/>
            <person name="Land M."/>
            <person name="Hauser L."/>
            <person name="Kyrpides N."/>
            <person name="Lykidis A."/>
            <person name="Lovley D."/>
            <person name="Richardson P."/>
        </authorList>
    </citation>
    <scope>NUCLEOTIDE SEQUENCE [LARGE SCALE GENOMIC DNA]</scope>
    <source>
        <strain>ATCC BAA-1014 / DSM 16622 / JCM 12645 / Bem</strain>
    </source>
</reference>
<keyword id="KW-0378">Hydrolase</keyword>
<keyword id="KW-0441">Lipid A biosynthesis</keyword>
<keyword id="KW-0444">Lipid biosynthesis</keyword>
<keyword id="KW-0443">Lipid metabolism</keyword>
<keyword id="KW-0479">Metal-binding</keyword>
<keyword id="KW-1185">Reference proteome</keyword>
<keyword id="KW-0862">Zinc</keyword>